<evidence type="ECO:0000255" key="1">
    <source>
        <dbReference type="HAMAP-Rule" id="MF_01300"/>
    </source>
</evidence>
<evidence type="ECO:0000256" key="2">
    <source>
        <dbReference type="SAM" id="MobiDB-lite"/>
    </source>
</evidence>
<keyword id="KW-0997">Cell inner membrane</keyword>
<keyword id="KW-1003">Cell membrane</keyword>
<keyword id="KW-0472">Membrane</keyword>
<keyword id="KW-0769">Symport</keyword>
<keyword id="KW-0812">Transmembrane</keyword>
<keyword id="KW-1133">Transmembrane helix</keyword>
<keyword id="KW-0813">Transport</keyword>
<dbReference type="EMBL" id="CP000058">
    <property type="protein sequence ID" value="AAZ37726.1"/>
    <property type="molecule type" value="Genomic_DNA"/>
</dbReference>
<dbReference type="SMR" id="Q48FG6"/>
<dbReference type="KEGG" id="psp:PSPPH_3728"/>
<dbReference type="eggNOG" id="COG1301">
    <property type="taxonomic scope" value="Bacteria"/>
</dbReference>
<dbReference type="HOGENOM" id="CLU_019375_7_0_6"/>
<dbReference type="Proteomes" id="UP000000551">
    <property type="component" value="Chromosome"/>
</dbReference>
<dbReference type="GO" id="GO:0005886">
    <property type="term" value="C:plasma membrane"/>
    <property type="evidence" value="ECO:0007669"/>
    <property type="project" value="UniProtKB-SubCell"/>
</dbReference>
<dbReference type="GO" id="GO:0015138">
    <property type="term" value="F:fumarate transmembrane transporter activity"/>
    <property type="evidence" value="ECO:0007669"/>
    <property type="project" value="TreeGrafter"/>
</dbReference>
<dbReference type="GO" id="GO:0015366">
    <property type="term" value="F:malate:proton symporter activity"/>
    <property type="evidence" value="ECO:0007669"/>
    <property type="project" value="TreeGrafter"/>
</dbReference>
<dbReference type="GO" id="GO:0015141">
    <property type="term" value="F:succinate transmembrane transporter activity"/>
    <property type="evidence" value="ECO:0007669"/>
    <property type="project" value="TreeGrafter"/>
</dbReference>
<dbReference type="GO" id="GO:0070778">
    <property type="term" value="P:L-aspartate transmembrane transport"/>
    <property type="evidence" value="ECO:0007669"/>
    <property type="project" value="TreeGrafter"/>
</dbReference>
<dbReference type="FunFam" id="1.10.3860.10:FF:000001">
    <property type="entry name" value="C4-dicarboxylate transport protein"/>
    <property type="match status" value="1"/>
</dbReference>
<dbReference type="Gene3D" id="1.10.3860.10">
    <property type="entry name" value="Sodium:dicarboxylate symporter"/>
    <property type="match status" value="1"/>
</dbReference>
<dbReference type="HAMAP" id="MF_01300">
    <property type="entry name" value="C4_dicarb_transport"/>
    <property type="match status" value="1"/>
</dbReference>
<dbReference type="InterPro" id="IPR023954">
    <property type="entry name" value="C4_dicarb_transport"/>
</dbReference>
<dbReference type="InterPro" id="IPR001991">
    <property type="entry name" value="Na-dicarboxylate_symporter"/>
</dbReference>
<dbReference type="InterPro" id="IPR018107">
    <property type="entry name" value="Na-dicarboxylate_symporter_CS"/>
</dbReference>
<dbReference type="InterPro" id="IPR036458">
    <property type="entry name" value="Na:dicarbo_symporter_sf"/>
</dbReference>
<dbReference type="NCBIfam" id="NF002461">
    <property type="entry name" value="PRK01663.1"/>
    <property type="match status" value="1"/>
</dbReference>
<dbReference type="NCBIfam" id="NF009587">
    <property type="entry name" value="PRK13027.1"/>
    <property type="match status" value="1"/>
</dbReference>
<dbReference type="PANTHER" id="PTHR42865:SF1">
    <property type="entry name" value="AEROBIC C4-DICARBOXYLATE TRANSPORT PROTEIN"/>
    <property type="match status" value="1"/>
</dbReference>
<dbReference type="PANTHER" id="PTHR42865">
    <property type="entry name" value="PROTON/GLUTAMATE-ASPARTATE SYMPORTER"/>
    <property type="match status" value="1"/>
</dbReference>
<dbReference type="Pfam" id="PF00375">
    <property type="entry name" value="SDF"/>
    <property type="match status" value="1"/>
</dbReference>
<dbReference type="PRINTS" id="PR00173">
    <property type="entry name" value="EDTRNSPORT"/>
</dbReference>
<dbReference type="SUPFAM" id="SSF118215">
    <property type="entry name" value="Proton glutamate symport protein"/>
    <property type="match status" value="1"/>
</dbReference>
<dbReference type="PROSITE" id="PS00713">
    <property type="entry name" value="NA_DICARBOXYL_SYMP_1"/>
    <property type="match status" value="1"/>
</dbReference>
<dbReference type="PROSITE" id="PS00714">
    <property type="entry name" value="NA_DICARBOXYL_SYMP_2"/>
    <property type="match status" value="1"/>
</dbReference>
<accession>Q48FG6</accession>
<organism>
    <name type="scientific">Pseudomonas savastanoi pv. phaseolicola (strain 1448A / Race 6)</name>
    <name type="common">Pseudomonas syringae pv. phaseolicola (strain 1448A / Race 6)</name>
    <dbReference type="NCBI Taxonomy" id="264730"/>
    <lineage>
        <taxon>Bacteria</taxon>
        <taxon>Pseudomonadati</taxon>
        <taxon>Pseudomonadota</taxon>
        <taxon>Gammaproteobacteria</taxon>
        <taxon>Pseudomonadales</taxon>
        <taxon>Pseudomonadaceae</taxon>
        <taxon>Pseudomonas</taxon>
    </lineage>
</organism>
<proteinExistence type="inferred from homology"/>
<name>DCTA_PSE14</name>
<feature type="chain" id="PRO_1000067453" description="C4-dicarboxylate transport protein">
    <location>
        <begin position="1"/>
        <end position="460"/>
    </location>
</feature>
<feature type="transmembrane region" description="Helical" evidence="1">
    <location>
        <begin position="20"/>
        <end position="40"/>
    </location>
</feature>
<feature type="transmembrane region" description="Helical" evidence="1">
    <location>
        <begin position="56"/>
        <end position="76"/>
    </location>
</feature>
<feature type="transmembrane region" description="Helical" evidence="1">
    <location>
        <begin position="88"/>
        <end position="108"/>
    </location>
</feature>
<feature type="transmembrane region" description="Helical" evidence="1">
    <location>
        <begin position="153"/>
        <end position="173"/>
    </location>
</feature>
<feature type="transmembrane region" description="Helical" evidence="1">
    <location>
        <begin position="200"/>
        <end position="220"/>
    </location>
</feature>
<feature type="transmembrane region" description="Helical" evidence="1">
    <location>
        <begin position="234"/>
        <end position="254"/>
    </location>
</feature>
<feature type="transmembrane region" description="Helical" evidence="1">
    <location>
        <begin position="301"/>
        <end position="321"/>
    </location>
</feature>
<feature type="transmembrane region" description="Helical" evidence="1">
    <location>
        <begin position="342"/>
        <end position="362"/>
    </location>
</feature>
<feature type="transmembrane region" description="Helical" evidence="1">
    <location>
        <begin position="364"/>
        <end position="384"/>
    </location>
</feature>
<feature type="region of interest" description="Disordered" evidence="2">
    <location>
        <begin position="438"/>
        <end position="460"/>
    </location>
</feature>
<gene>
    <name evidence="1" type="primary">dctA</name>
    <name type="ordered locus">PSPPH_3728</name>
</gene>
<reference key="1">
    <citation type="journal article" date="2005" name="J. Bacteriol.">
        <title>Whole-genome sequence analysis of Pseudomonas syringae pv. phaseolicola 1448A reveals divergence among pathovars in genes involved in virulence and transposition.</title>
        <authorList>
            <person name="Joardar V."/>
            <person name="Lindeberg M."/>
            <person name="Jackson R.W."/>
            <person name="Selengut J."/>
            <person name="Dodson R."/>
            <person name="Brinkac L.M."/>
            <person name="Daugherty S.C."/>
            <person name="DeBoy R.T."/>
            <person name="Durkin A.S."/>
            <person name="Gwinn Giglio M."/>
            <person name="Madupu R."/>
            <person name="Nelson W.C."/>
            <person name="Rosovitz M.J."/>
            <person name="Sullivan S.A."/>
            <person name="Crabtree J."/>
            <person name="Creasy T."/>
            <person name="Davidsen T.M."/>
            <person name="Haft D.H."/>
            <person name="Zafar N."/>
            <person name="Zhou L."/>
            <person name="Halpin R."/>
            <person name="Holley T."/>
            <person name="Khouri H.M."/>
            <person name="Feldblyum T.V."/>
            <person name="White O."/>
            <person name="Fraser C.M."/>
            <person name="Chatterjee A.K."/>
            <person name="Cartinhour S."/>
            <person name="Schneider D."/>
            <person name="Mansfield J.W."/>
            <person name="Collmer A."/>
            <person name="Buell R."/>
        </authorList>
    </citation>
    <scope>NUCLEOTIDE SEQUENCE [LARGE SCALE GENOMIC DNA]</scope>
    <source>
        <strain>1448A / Race 6</strain>
    </source>
</reference>
<sequence length="460" mass="48666">MPTTPLRKTAMTTRQPIYKSLYFQVIVAIVIGILIGHFYPDTGKALKPLGDGFIKLIKMVIAPIIFCTVVSGIAGMQNMKSVGKTGGYALLYFEIVSTIALLIGLIVVNVVQPGAGMNIDVSTLDASKIAAYVTAGQDQSIVGFILNVIPNTIVGAFANGDILQVLMFSVIFGFALHRLGSYGKPVLDFIDRFAHVMFNIINMIMKLAPIGAFGAMAFTIGAYGVSSLVQLGQLMICFYITCALFVVLVLGAICRAHGFSIFKLVRYIREELLIVLGTSSSESALPRMLIKMERLGAKKSVVGLVIPTGYSFNLDGTSIYLTMAAVFIAQATNTHMDITHQITLLLVLLLSSKGAAGVTGSGFIVLAATLSAVGHLPVAGLALILGIDRFMSEARALTNLVGNAVATVVVAKWVGELDTDKLQSELASGGSAILETRPEDDLGVAEGPTPANAVNTTKTV</sequence>
<comment type="function">
    <text evidence="1">Responsible for the transport of dicarboxylates such as succinate, fumarate, and malate from the periplasm across the membrane.</text>
</comment>
<comment type="subcellular location">
    <subcellularLocation>
        <location evidence="1">Cell inner membrane</location>
        <topology evidence="1">Multi-pass membrane protein</topology>
    </subcellularLocation>
</comment>
<comment type="similarity">
    <text evidence="1">Belongs to the dicarboxylate/amino acid:cation symporter (DAACS) (TC 2.A.23) family.</text>
</comment>
<protein>
    <recommendedName>
        <fullName evidence="1">C4-dicarboxylate transport protein</fullName>
    </recommendedName>
</protein>